<comment type="subcellular location">
    <subcellularLocation>
        <location evidence="1">Secreted</location>
    </subcellularLocation>
</comment>
<comment type="similarity">
    <text evidence="3">Belongs to the DEFL family.</text>
</comment>
<gene>
    <name type="primary">LCR3</name>
    <name type="ordered locus">At5g47175</name>
    <name type="ORF">K14A3</name>
    <name type="ORF">MQL5</name>
</gene>
<proteinExistence type="evidence at transcript level"/>
<name>DF141_ARATH</name>
<accession>P82718</accession>
<keyword id="KW-0929">Antimicrobial</keyword>
<keyword id="KW-1015">Disulfide bond</keyword>
<keyword id="KW-0295">Fungicide</keyword>
<keyword id="KW-0611">Plant defense</keyword>
<keyword id="KW-1185">Reference proteome</keyword>
<keyword id="KW-0964">Secreted</keyword>
<keyword id="KW-0732">Signal</keyword>
<reference evidence="3" key="1">
    <citation type="journal article" date="2000" name="DNA Res.">
        <title>Structural analysis of Arabidopsis thaliana chromosome 5. X. Sequence features of the regions of 3,076,755 bp covered by sixty P1 and TAC clones.</title>
        <authorList>
            <person name="Sato S."/>
            <person name="Nakamura Y."/>
            <person name="Kaneko T."/>
            <person name="Katoh T."/>
            <person name="Asamizu E."/>
            <person name="Kotani H."/>
            <person name="Tabata S."/>
        </authorList>
    </citation>
    <scope>NUCLEOTIDE SEQUENCE [LARGE SCALE GENOMIC DNA]</scope>
    <source>
        <strain>cv. Columbia</strain>
    </source>
</reference>
<reference key="2">
    <citation type="submission" date="2009-04" db="EMBL/GenBank/DDBJ databases">
        <title>Structural analysis of Arabidopsis thaliana chromosome 5. XI.</title>
        <authorList>
            <person name="Kaneko T."/>
            <person name="Katoh T."/>
            <person name="Asamizu E."/>
            <person name="Sato S."/>
            <person name="Nakamura Y."/>
            <person name="Kotani H."/>
            <person name="Tabata S."/>
        </authorList>
    </citation>
    <scope>NUCLEOTIDE SEQUENCE [LARGE SCALE GENOMIC DNA]</scope>
    <source>
        <strain>cv. Columbia</strain>
    </source>
</reference>
<reference key="3">
    <citation type="journal article" date="2017" name="Plant J.">
        <title>Araport11: a complete reannotation of the Arabidopsis thaliana reference genome.</title>
        <authorList>
            <person name="Cheng C.Y."/>
            <person name="Krishnakumar V."/>
            <person name="Chan A.P."/>
            <person name="Thibaud-Nissen F."/>
            <person name="Schobel S."/>
            <person name="Town C.D."/>
        </authorList>
    </citation>
    <scope>GENOME REANNOTATION</scope>
    <source>
        <strain>cv. Columbia</strain>
    </source>
</reference>
<reference evidence="3" key="4">
    <citation type="journal article" date="2001" name="Plant Mol. Biol.">
        <title>Two large Arabidopsis thaliana gene families are homologous to the Brassica gene superfamily that encodes pollen coat proteins and the male component of the self-incompatibility response.</title>
        <authorList>
            <person name="Vanoosthuyse V."/>
            <person name="Miege C."/>
            <person name="Dumas C."/>
            <person name="Cock J.M."/>
        </authorList>
    </citation>
    <scope>IDENTIFICATION</scope>
</reference>
<reference key="5">
    <citation type="journal article" date="2005" name="Plant Physiol.">
        <title>Genome organization of more than 300 defensin-like genes in Arabidopsis.</title>
        <authorList>
            <person name="Silverstein K.A.T."/>
            <person name="Graham M.A."/>
            <person name="Paape T.D."/>
            <person name="VandenBosch K.A."/>
        </authorList>
    </citation>
    <scope>GENE FAMILY</scope>
</reference>
<dbReference type="EMBL" id="AB018117">
    <property type="status" value="NOT_ANNOTATED_CDS"/>
    <property type="molecule type" value="Genomic_DNA"/>
</dbReference>
<dbReference type="EMBL" id="AB025609">
    <property type="status" value="NOT_ANNOTATED_CDS"/>
    <property type="molecule type" value="Genomic_DNA"/>
</dbReference>
<dbReference type="EMBL" id="CP002688">
    <property type="protein sequence ID" value="AED95479.1"/>
    <property type="molecule type" value="Genomic_DNA"/>
</dbReference>
<dbReference type="RefSeq" id="NP_001032027.1">
    <property type="nucleotide sequence ID" value="NM_001036950.2"/>
</dbReference>
<dbReference type="SMR" id="P82718"/>
<dbReference type="STRING" id="3702.P82718"/>
<dbReference type="PaxDb" id="3702-AT5G47175.1"/>
<dbReference type="ProteomicsDB" id="224629"/>
<dbReference type="EnsemblPlants" id="AT5G47175.1">
    <property type="protein sequence ID" value="AT5G47175.1"/>
    <property type="gene ID" value="AT5G47175"/>
</dbReference>
<dbReference type="GeneID" id="3771459"/>
<dbReference type="Gramene" id="AT5G47175.1">
    <property type="protein sequence ID" value="AT5G47175.1"/>
    <property type="gene ID" value="AT5G47175"/>
</dbReference>
<dbReference type="KEGG" id="ath:AT5G47175"/>
<dbReference type="Araport" id="AT5G47175"/>
<dbReference type="TAIR" id="AT5G47175">
    <property type="gene designation" value="LCR3"/>
</dbReference>
<dbReference type="HOGENOM" id="CLU_182511_2_1_1"/>
<dbReference type="InParanoid" id="P82718"/>
<dbReference type="OMA" id="AGNCNAL"/>
<dbReference type="OrthoDB" id="1095566at2759"/>
<dbReference type="PhylomeDB" id="P82718"/>
<dbReference type="PRO" id="PR:P82718"/>
<dbReference type="Proteomes" id="UP000006548">
    <property type="component" value="Chromosome 5"/>
</dbReference>
<dbReference type="ExpressionAtlas" id="P82718">
    <property type="expression patterns" value="baseline and differential"/>
</dbReference>
<dbReference type="GO" id="GO:0005576">
    <property type="term" value="C:extracellular region"/>
    <property type="evidence" value="ECO:0007669"/>
    <property type="project" value="UniProtKB-SubCell"/>
</dbReference>
<dbReference type="GO" id="GO:0050832">
    <property type="term" value="P:defense response to fungus"/>
    <property type="evidence" value="ECO:0007669"/>
    <property type="project" value="UniProtKB-KW"/>
</dbReference>
<dbReference type="GO" id="GO:0031640">
    <property type="term" value="P:killing of cells of another organism"/>
    <property type="evidence" value="ECO:0007669"/>
    <property type="project" value="UniProtKB-KW"/>
</dbReference>
<dbReference type="InterPro" id="IPR010851">
    <property type="entry name" value="DEFL"/>
</dbReference>
<dbReference type="PANTHER" id="PTHR33830:SF3">
    <property type="entry name" value="DEFENSIN-LIKE PROTEIN 127-RELATED"/>
    <property type="match status" value="1"/>
</dbReference>
<dbReference type="PANTHER" id="PTHR33830">
    <property type="entry name" value="DEFENSIN-LIKE PROTEIN 184-RELATED"/>
    <property type="match status" value="1"/>
</dbReference>
<dbReference type="Pfam" id="PF07333">
    <property type="entry name" value="SLR1-BP"/>
    <property type="match status" value="1"/>
</dbReference>
<organism evidence="3">
    <name type="scientific">Arabidopsis thaliana</name>
    <name type="common">Mouse-ear cress</name>
    <dbReference type="NCBI Taxonomy" id="3702"/>
    <lineage>
        <taxon>Eukaryota</taxon>
        <taxon>Viridiplantae</taxon>
        <taxon>Streptophyta</taxon>
        <taxon>Embryophyta</taxon>
        <taxon>Tracheophyta</taxon>
        <taxon>Spermatophyta</taxon>
        <taxon>Magnoliopsida</taxon>
        <taxon>eudicotyledons</taxon>
        <taxon>Gunneridae</taxon>
        <taxon>Pentapetalae</taxon>
        <taxon>rosids</taxon>
        <taxon>malvids</taxon>
        <taxon>Brassicales</taxon>
        <taxon>Brassicaceae</taxon>
        <taxon>Camelineae</taxon>
        <taxon>Arabidopsis</taxon>
    </lineage>
</organism>
<sequence>MTKSIISAFFIILILGMMVNEIEGQQQQQRCEEALTEIDCGAGNCNALCLQKRKGLGRCVQRTPCDKLKCMCYYPCSS</sequence>
<feature type="signal peptide" evidence="2">
    <location>
        <begin position="1"/>
        <end position="24"/>
    </location>
</feature>
<feature type="chain" id="PRO_0000017246" description="Defensin-like protein 141">
    <location>
        <begin position="25"/>
        <end position="78"/>
    </location>
</feature>
<feature type="disulfide bond" evidence="1">
    <location>
        <begin position="31"/>
        <end position="76"/>
    </location>
</feature>
<feature type="disulfide bond" evidence="1">
    <location>
        <begin position="40"/>
        <end position="59"/>
    </location>
</feature>
<feature type="disulfide bond" evidence="1">
    <location>
        <begin position="45"/>
        <end position="70"/>
    </location>
</feature>
<feature type="disulfide bond" evidence="1">
    <location>
        <begin position="49"/>
        <end position="72"/>
    </location>
</feature>
<protein>
    <recommendedName>
        <fullName>Defensin-like protein 141</fullName>
    </recommendedName>
    <alternativeName>
        <fullName>Low-molecular-weight cysteine-rich protein 3</fullName>
        <shortName>Protein LCR3</shortName>
    </alternativeName>
</protein>
<evidence type="ECO:0000250" key="1"/>
<evidence type="ECO:0000255" key="2"/>
<evidence type="ECO:0000305" key="3"/>